<dbReference type="EC" id="1.1.99.1" evidence="2"/>
<dbReference type="EC" id="1.2.1.8" evidence="2"/>
<dbReference type="EMBL" id="AE005174">
    <property type="protein sequence ID" value="AAG54653.1"/>
    <property type="molecule type" value="Genomic_DNA"/>
</dbReference>
<dbReference type="EMBL" id="BA000007">
    <property type="protein sequence ID" value="BAB33780.1"/>
    <property type="molecule type" value="Genomic_DNA"/>
</dbReference>
<dbReference type="PIR" id="A85524">
    <property type="entry name" value="A85524"/>
</dbReference>
<dbReference type="PIR" id="E90673">
    <property type="entry name" value="E90673"/>
</dbReference>
<dbReference type="RefSeq" id="NP_308384.1">
    <property type="nucleotide sequence ID" value="NC_002695.1"/>
</dbReference>
<dbReference type="RefSeq" id="WP_001159114.1">
    <property type="nucleotide sequence ID" value="NZ_VOAI01000005.1"/>
</dbReference>
<dbReference type="SMR" id="Q8X6C6"/>
<dbReference type="STRING" id="155864.Z0398"/>
<dbReference type="GeneID" id="914458"/>
<dbReference type="KEGG" id="ece:Z0398"/>
<dbReference type="KEGG" id="ecs:ECs_0357"/>
<dbReference type="PATRIC" id="fig|386585.9.peg.449"/>
<dbReference type="eggNOG" id="COG2303">
    <property type="taxonomic scope" value="Bacteria"/>
</dbReference>
<dbReference type="HOGENOM" id="CLU_002865_7_1_6"/>
<dbReference type="OMA" id="NHFESCA"/>
<dbReference type="UniPathway" id="UPA00529">
    <property type="reaction ID" value="UER00385"/>
</dbReference>
<dbReference type="Proteomes" id="UP000000558">
    <property type="component" value="Chromosome"/>
</dbReference>
<dbReference type="Proteomes" id="UP000002519">
    <property type="component" value="Chromosome"/>
</dbReference>
<dbReference type="GO" id="GO:0005886">
    <property type="term" value="C:plasma membrane"/>
    <property type="evidence" value="ECO:0007669"/>
    <property type="project" value="UniProtKB-SubCell"/>
</dbReference>
<dbReference type="GO" id="GO:0008802">
    <property type="term" value="F:betaine-aldehyde dehydrogenase (NAD+) activity"/>
    <property type="evidence" value="ECO:0007669"/>
    <property type="project" value="UniProtKB-EC"/>
</dbReference>
<dbReference type="GO" id="GO:0008812">
    <property type="term" value="F:choline dehydrogenase activity"/>
    <property type="evidence" value="ECO:0007669"/>
    <property type="project" value="UniProtKB-UniRule"/>
</dbReference>
<dbReference type="GO" id="GO:0050660">
    <property type="term" value="F:flavin adenine dinucleotide binding"/>
    <property type="evidence" value="ECO:0007669"/>
    <property type="project" value="InterPro"/>
</dbReference>
<dbReference type="GO" id="GO:0019285">
    <property type="term" value="P:glycine betaine biosynthetic process from choline"/>
    <property type="evidence" value="ECO:0007669"/>
    <property type="project" value="UniProtKB-UniRule"/>
</dbReference>
<dbReference type="Gene3D" id="3.50.50.60">
    <property type="entry name" value="FAD/NAD(P)-binding domain"/>
    <property type="match status" value="1"/>
</dbReference>
<dbReference type="Gene3D" id="3.30.560.10">
    <property type="entry name" value="Glucose Oxidase, domain 3"/>
    <property type="match status" value="1"/>
</dbReference>
<dbReference type="HAMAP" id="MF_00750">
    <property type="entry name" value="Choline_dehydrogen"/>
    <property type="match status" value="1"/>
</dbReference>
<dbReference type="InterPro" id="IPR011533">
    <property type="entry name" value="BetA"/>
</dbReference>
<dbReference type="InterPro" id="IPR036188">
    <property type="entry name" value="FAD/NAD-bd_sf"/>
</dbReference>
<dbReference type="InterPro" id="IPR012132">
    <property type="entry name" value="GMC_OxRdtase"/>
</dbReference>
<dbReference type="InterPro" id="IPR000172">
    <property type="entry name" value="GMC_OxRdtase_N"/>
</dbReference>
<dbReference type="InterPro" id="IPR007867">
    <property type="entry name" value="GMC_OxRtase_C"/>
</dbReference>
<dbReference type="NCBIfam" id="TIGR01810">
    <property type="entry name" value="betA"/>
    <property type="match status" value="1"/>
</dbReference>
<dbReference type="NCBIfam" id="NF002550">
    <property type="entry name" value="PRK02106.1"/>
    <property type="match status" value="1"/>
</dbReference>
<dbReference type="PANTHER" id="PTHR11552:SF147">
    <property type="entry name" value="CHOLINE DEHYDROGENASE, MITOCHONDRIAL"/>
    <property type="match status" value="1"/>
</dbReference>
<dbReference type="PANTHER" id="PTHR11552">
    <property type="entry name" value="GLUCOSE-METHANOL-CHOLINE GMC OXIDOREDUCTASE"/>
    <property type="match status" value="1"/>
</dbReference>
<dbReference type="Pfam" id="PF05199">
    <property type="entry name" value="GMC_oxred_C"/>
    <property type="match status" value="1"/>
</dbReference>
<dbReference type="Pfam" id="PF00732">
    <property type="entry name" value="GMC_oxred_N"/>
    <property type="match status" value="1"/>
</dbReference>
<dbReference type="PIRSF" id="PIRSF000137">
    <property type="entry name" value="Alcohol_oxidase"/>
    <property type="match status" value="1"/>
</dbReference>
<dbReference type="SUPFAM" id="SSF54373">
    <property type="entry name" value="FAD-linked reductases, C-terminal domain"/>
    <property type="match status" value="1"/>
</dbReference>
<dbReference type="SUPFAM" id="SSF51905">
    <property type="entry name" value="FAD/NAD(P)-binding domain"/>
    <property type="match status" value="1"/>
</dbReference>
<dbReference type="PROSITE" id="PS00623">
    <property type="entry name" value="GMC_OXRED_1"/>
    <property type="match status" value="1"/>
</dbReference>
<dbReference type="PROSITE" id="PS00624">
    <property type="entry name" value="GMC_OXRED_2"/>
    <property type="match status" value="1"/>
</dbReference>
<protein>
    <recommendedName>
        <fullName evidence="2">Oxygen-dependent choline dehydrogenase</fullName>
        <shortName evidence="2">CDH</shortName>
        <shortName evidence="2">CHD</shortName>
        <ecNumber evidence="2">1.1.99.1</ecNumber>
    </recommendedName>
    <alternativeName>
        <fullName evidence="2">Betaine aldehyde dehydrogenase</fullName>
        <shortName evidence="2">BADH</shortName>
        <ecNumber evidence="2">1.2.1.8</ecNumber>
    </alternativeName>
</protein>
<keyword id="KW-1003">Cell membrane</keyword>
<keyword id="KW-0274">FAD</keyword>
<keyword id="KW-0285">Flavoprotein</keyword>
<keyword id="KW-0472">Membrane</keyword>
<keyword id="KW-0520">NAD</keyword>
<keyword id="KW-0560">Oxidoreductase</keyword>
<keyword id="KW-1185">Reference proteome</keyword>
<gene>
    <name evidence="2" type="primary">betA</name>
    <name type="ordered locus">Z0398</name>
    <name type="ordered locus">ECs0357</name>
</gene>
<name>BETA_ECO57</name>
<proteinExistence type="inferred from homology"/>
<organism>
    <name type="scientific">Escherichia coli O157:H7</name>
    <dbReference type="NCBI Taxonomy" id="83334"/>
    <lineage>
        <taxon>Bacteria</taxon>
        <taxon>Pseudomonadati</taxon>
        <taxon>Pseudomonadota</taxon>
        <taxon>Gammaproteobacteria</taxon>
        <taxon>Enterobacterales</taxon>
        <taxon>Enterobacteriaceae</taxon>
        <taxon>Escherichia</taxon>
    </lineage>
</organism>
<comment type="function">
    <text evidence="2">Involved in the biosynthesis of the osmoprotectant glycine betaine. Catalyzes the oxidation of choline to betaine aldehyde and betaine aldehyde to glycine betaine at the same rate.</text>
</comment>
<comment type="catalytic activity">
    <reaction evidence="2">
        <text>choline + A = betaine aldehyde + AH2</text>
        <dbReference type="Rhea" id="RHEA:17433"/>
        <dbReference type="ChEBI" id="CHEBI:13193"/>
        <dbReference type="ChEBI" id="CHEBI:15354"/>
        <dbReference type="ChEBI" id="CHEBI:15710"/>
        <dbReference type="ChEBI" id="CHEBI:17499"/>
        <dbReference type="EC" id="1.1.99.1"/>
    </reaction>
</comment>
<comment type="catalytic activity">
    <reaction evidence="2">
        <text>betaine aldehyde + NAD(+) + H2O = glycine betaine + NADH + 2 H(+)</text>
        <dbReference type="Rhea" id="RHEA:15305"/>
        <dbReference type="ChEBI" id="CHEBI:15377"/>
        <dbReference type="ChEBI" id="CHEBI:15378"/>
        <dbReference type="ChEBI" id="CHEBI:15710"/>
        <dbReference type="ChEBI" id="CHEBI:17750"/>
        <dbReference type="ChEBI" id="CHEBI:57540"/>
        <dbReference type="ChEBI" id="CHEBI:57945"/>
        <dbReference type="EC" id="1.2.1.8"/>
    </reaction>
</comment>
<comment type="cofactor">
    <cofactor evidence="2">
        <name>FAD</name>
        <dbReference type="ChEBI" id="CHEBI:57692"/>
    </cofactor>
</comment>
<comment type="pathway">
    <text evidence="2">Amine and polyamine biosynthesis; betaine biosynthesis via choline pathway; betaine aldehyde from choline (cytochrome c reductase route): step 1/1.</text>
</comment>
<comment type="subcellular location">
    <subcellularLocation>
        <location evidence="1">Cell membrane</location>
        <topology evidence="1">Peripheral membrane protein</topology>
    </subcellularLocation>
</comment>
<comment type="similarity">
    <text evidence="2">Belongs to the GMC oxidoreductase family.</text>
</comment>
<accession>Q8X6C6</accession>
<feature type="chain" id="PRO_0000205587" description="Oxygen-dependent choline dehydrogenase">
    <location>
        <begin position="1"/>
        <end position="562"/>
    </location>
</feature>
<feature type="active site" description="Proton acceptor" evidence="2">
    <location>
        <position position="473"/>
    </location>
</feature>
<feature type="binding site" evidence="2">
    <location>
        <begin position="4"/>
        <end position="33"/>
    </location>
    <ligand>
        <name>FAD</name>
        <dbReference type="ChEBI" id="CHEBI:57692"/>
    </ligand>
</feature>
<sequence length="562" mass="62633">MQFDYIIIGAGSAGNVLATRLTEDPNTSVLLLEAGGPDYRFDFRTQMPAALAFPLQGKRYNWAYETEPEPFMNNRRMECGRGKGLGGSSLINGMCYIRGNAMDLDNWAKEPGLENWSYLDCLPYYRKAETRDVGENDYHGGDGPVSVTTSKPGVNPLFEAMIEAGVQAGYPRTDDLNGYQQEGFGPMDRTVTPQGRRASTARGYLDQAKSRPNLTIRTHAMTDHIIFDCKRAVGVEWLEGDSTIPTRATANKEVLLCAGAIASPQILQRSGVGNAELLAEFDIPLVHDLPGVGENLQDHLEMYLQYECKEPVSLYPALQWWNQPKIGAEWLFGGTGVGASNHFEAGGFIRSREEFAWPNIQYHFLPVAINYNGSNAVKEHGFQCHVGSMRSPSRGHVRIKSRDPHQHPAILFNYMSHEQDWQEFRDAIRITREIMHQPALDQYRGREISPGTECQTDEQLDEFVRNHAETAFHPCGTCKMGYDEMSVVDGEGRVHGLEGLRVVDASIMPQIITGNLNATTIMIGEKMADMIRGKEALPRSTAGYFVANGMPVRAKKMSRDLN</sequence>
<evidence type="ECO:0000250" key="1"/>
<evidence type="ECO:0000255" key="2">
    <source>
        <dbReference type="HAMAP-Rule" id="MF_00750"/>
    </source>
</evidence>
<reference key="1">
    <citation type="journal article" date="2001" name="Nature">
        <title>Genome sequence of enterohaemorrhagic Escherichia coli O157:H7.</title>
        <authorList>
            <person name="Perna N.T."/>
            <person name="Plunkett G. III"/>
            <person name="Burland V."/>
            <person name="Mau B."/>
            <person name="Glasner J.D."/>
            <person name="Rose D.J."/>
            <person name="Mayhew G.F."/>
            <person name="Evans P.S."/>
            <person name="Gregor J."/>
            <person name="Kirkpatrick H.A."/>
            <person name="Posfai G."/>
            <person name="Hackett J."/>
            <person name="Klink S."/>
            <person name="Boutin A."/>
            <person name="Shao Y."/>
            <person name="Miller L."/>
            <person name="Grotbeck E.J."/>
            <person name="Davis N.W."/>
            <person name="Lim A."/>
            <person name="Dimalanta E.T."/>
            <person name="Potamousis K."/>
            <person name="Apodaca J."/>
            <person name="Anantharaman T.S."/>
            <person name="Lin J."/>
            <person name="Yen G."/>
            <person name="Schwartz D.C."/>
            <person name="Welch R.A."/>
            <person name="Blattner F.R."/>
        </authorList>
    </citation>
    <scope>NUCLEOTIDE SEQUENCE [LARGE SCALE GENOMIC DNA]</scope>
    <source>
        <strain>O157:H7 / EDL933 / ATCC 700927 / EHEC</strain>
    </source>
</reference>
<reference key="2">
    <citation type="journal article" date="2001" name="DNA Res.">
        <title>Complete genome sequence of enterohemorrhagic Escherichia coli O157:H7 and genomic comparison with a laboratory strain K-12.</title>
        <authorList>
            <person name="Hayashi T."/>
            <person name="Makino K."/>
            <person name="Ohnishi M."/>
            <person name="Kurokawa K."/>
            <person name="Ishii K."/>
            <person name="Yokoyama K."/>
            <person name="Han C.-G."/>
            <person name="Ohtsubo E."/>
            <person name="Nakayama K."/>
            <person name="Murata T."/>
            <person name="Tanaka M."/>
            <person name="Tobe T."/>
            <person name="Iida T."/>
            <person name="Takami H."/>
            <person name="Honda T."/>
            <person name="Sasakawa C."/>
            <person name="Ogasawara N."/>
            <person name="Yasunaga T."/>
            <person name="Kuhara S."/>
            <person name="Shiba T."/>
            <person name="Hattori M."/>
            <person name="Shinagawa H."/>
        </authorList>
    </citation>
    <scope>NUCLEOTIDE SEQUENCE [LARGE SCALE GENOMIC DNA]</scope>
    <source>
        <strain>O157:H7 / Sakai / RIMD 0509952 / EHEC</strain>
    </source>
</reference>